<comment type="function">
    <text evidence="1">Component of the ribosome, a large ribonucleoprotein complex responsible for the synthesis of proteins in the cell (By similarity). The small ribosomal subunit (SSU) binds messenger RNAs (mRNAs) and translates the encoded message by selecting cognate aminoacyl-transfer RNA (tRNA) molecules (By similarity). The large subunit (LSU) contains the ribosomal catalytic site termed the peptidyl transferase center (PTC), which catalyzes the formation of peptide bonds, thereby polymerizing the amino acids delivered by tRNAs into a polypeptide chain (By similarity). The nascent polypeptides leave the ribosome through a tunnel in the LSU and interact with protein factors that function in enzymatic processing, targeting, and the membrane insertion of nascent chains at the exit of the ribosomal tunnel (By similarity). As part of the LSU, it is probably required for its formation and the maturation of rRNAs (By similarity). Plays a role in bone development (By similarity).</text>
</comment>
<comment type="subunit">
    <text evidence="2 3">Component of the 60S large ribosomal subunit (LSU).</text>
</comment>
<comment type="subcellular location">
    <subcellularLocation>
        <location evidence="2 3">Cytoplasm</location>
    </subcellularLocation>
</comment>
<comment type="similarity">
    <text evidence="4">Belongs to the eukaryotic ribosomal protein eL13 family.</text>
</comment>
<organism>
    <name type="scientific">Oryctolagus cuniculus</name>
    <name type="common">Rabbit</name>
    <dbReference type="NCBI Taxonomy" id="9986"/>
    <lineage>
        <taxon>Eukaryota</taxon>
        <taxon>Metazoa</taxon>
        <taxon>Chordata</taxon>
        <taxon>Craniata</taxon>
        <taxon>Vertebrata</taxon>
        <taxon>Euteleostomi</taxon>
        <taxon>Mammalia</taxon>
        <taxon>Eutheria</taxon>
        <taxon>Euarchontoglires</taxon>
        <taxon>Glires</taxon>
        <taxon>Lagomorpha</taxon>
        <taxon>Leporidae</taxon>
        <taxon>Oryctolagus</taxon>
    </lineage>
</organism>
<sequence length="211" mass="24233">MAPSRNGMILKPHFHKDWQRRVATWFNQPARKIRRRKARQARARRIAPRPAAGPIRPIVRCPTVRYHTKVRAGHGFSLEELRVAGIHKKVARTIGISVDPRRRNKSTESLQANVQRLKEYRSKLVLFPRKPSAPKKGDSSAEELKLATQLTGPVMPIRNVFKKEKARVITEEEKNFKAFASLRMARANAHLFGIRAKRAKEAAEQDVEKKK</sequence>
<name>RL13_RABIT</name>
<gene>
    <name type="primary">RPL13</name>
</gene>
<dbReference type="EMBL" id="AAGW02028840">
    <property type="status" value="NOT_ANNOTATED_CDS"/>
    <property type="molecule type" value="Genomic_DNA"/>
</dbReference>
<dbReference type="PDB" id="7NWG">
    <property type="method" value="EM"/>
    <property type="resolution" value="3.80 A"/>
    <property type="chains" value="L3=1-211"/>
</dbReference>
<dbReference type="PDB" id="7NWI">
    <property type="method" value="EM"/>
    <property type="resolution" value="3.13 A"/>
    <property type="chains" value="L=1-211"/>
</dbReference>
<dbReference type="PDB" id="7OYD">
    <property type="method" value="EM"/>
    <property type="resolution" value="2.30 A"/>
    <property type="chains" value="L=1-211"/>
</dbReference>
<dbReference type="PDB" id="7QWR">
    <property type="method" value="EM"/>
    <property type="resolution" value="2.90 A"/>
    <property type="chains" value="L=1-211"/>
</dbReference>
<dbReference type="PDB" id="7TOQ">
    <property type="method" value="EM"/>
    <property type="resolution" value="3.10 A"/>
    <property type="chains" value="AL13=2-211"/>
</dbReference>
<dbReference type="PDB" id="7ZJW">
    <property type="method" value="EM"/>
    <property type="resolution" value="2.80 A"/>
    <property type="chains" value="LO=1-211"/>
</dbReference>
<dbReference type="PDB" id="7ZJX">
    <property type="method" value="EM"/>
    <property type="resolution" value="3.10 A"/>
    <property type="chains" value="LO=1-211"/>
</dbReference>
<dbReference type="PDB" id="8B5L">
    <property type="method" value="EM"/>
    <property type="resolution" value="2.86 A"/>
    <property type="chains" value="L=1-211"/>
</dbReference>
<dbReference type="PDB" id="8B6C">
    <property type="method" value="EM"/>
    <property type="resolution" value="2.79 A"/>
    <property type="chains" value="L=1-211"/>
</dbReference>
<dbReference type="PDB" id="8BHF">
    <property type="method" value="EM"/>
    <property type="resolution" value="3.10 A"/>
    <property type="chains" value="t3=2-211"/>
</dbReference>
<dbReference type="PDB" id="8BPO">
    <property type="method" value="EM"/>
    <property type="resolution" value="2.80 A"/>
    <property type="chains" value="K2=1-211"/>
</dbReference>
<dbReference type="PDB" id="8BTK">
    <property type="method" value="EM"/>
    <property type="resolution" value="3.50 A"/>
    <property type="chains" value="BL=1-211"/>
</dbReference>
<dbReference type="PDB" id="8P2K">
    <property type="method" value="EM"/>
    <property type="resolution" value="2.90 A"/>
    <property type="chains" value="BL=1-211"/>
</dbReference>
<dbReference type="PDB" id="8RJC">
    <property type="method" value="EM"/>
    <property type="resolution" value="2.90 A"/>
    <property type="chains" value="L=1-211"/>
</dbReference>
<dbReference type="PDB" id="9BDL">
    <property type="method" value="EM"/>
    <property type="resolution" value="2.80 A"/>
    <property type="chains" value="AL13=2-211"/>
</dbReference>
<dbReference type="PDB" id="9BDN">
    <property type="method" value="EM"/>
    <property type="resolution" value="3.10 A"/>
    <property type="chains" value="AL13=2-211"/>
</dbReference>
<dbReference type="PDB" id="9BDP">
    <property type="method" value="EM"/>
    <property type="resolution" value="3.70 A"/>
    <property type="chains" value="AL13=2-211"/>
</dbReference>
<dbReference type="PDB" id="9F1B">
    <property type="method" value="EM"/>
    <property type="resolution" value="3.01 A"/>
    <property type="chains" value="BL=1-211"/>
</dbReference>
<dbReference type="PDB" id="9F1C">
    <property type="method" value="EM"/>
    <property type="resolution" value="3.78 A"/>
    <property type="chains" value="BL=1-211"/>
</dbReference>
<dbReference type="PDB" id="9F1D">
    <property type="method" value="EM"/>
    <property type="resolution" value="3.26 A"/>
    <property type="chains" value="BL=1-211"/>
</dbReference>
<dbReference type="PDBsum" id="7NWG"/>
<dbReference type="PDBsum" id="7NWI"/>
<dbReference type="PDBsum" id="7OYD"/>
<dbReference type="PDBsum" id="7QWR"/>
<dbReference type="PDBsum" id="7TOQ"/>
<dbReference type="PDBsum" id="7ZJW"/>
<dbReference type="PDBsum" id="7ZJX"/>
<dbReference type="PDBsum" id="8B5L"/>
<dbReference type="PDBsum" id="8B6C"/>
<dbReference type="PDBsum" id="8BHF"/>
<dbReference type="PDBsum" id="8BPO"/>
<dbReference type="PDBsum" id="8BTK"/>
<dbReference type="PDBsum" id="8P2K"/>
<dbReference type="PDBsum" id="8RJC"/>
<dbReference type="PDBsum" id="9BDL"/>
<dbReference type="PDBsum" id="9BDN"/>
<dbReference type="PDBsum" id="9BDP"/>
<dbReference type="PDBsum" id="9F1B"/>
<dbReference type="PDBsum" id="9F1C"/>
<dbReference type="PDBsum" id="9F1D"/>
<dbReference type="EMDB" id="EMD-0099"/>
<dbReference type="EMDB" id="EMD-0100"/>
<dbReference type="EMDB" id="EMD-0192"/>
<dbReference type="EMDB" id="EMD-0194"/>
<dbReference type="EMDB" id="EMD-0195"/>
<dbReference type="EMDB" id="EMD-0197"/>
<dbReference type="EMDB" id="EMD-10181"/>
<dbReference type="EMDB" id="EMD-10380"/>
<dbReference type="EMDB" id="EMD-12631"/>
<dbReference type="EMDB" id="EMD-12633"/>
<dbReference type="EMDB" id="EMD-13114"/>
<dbReference type="EMDB" id="EMD-14192"/>
<dbReference type="EMDB" id="EMD-14751"/>
<dbReference type="EMDB" id="EMD-14752"/>
<dbReference type="EMDB" id="EMD-15860"/>
<dbReference type="EMDB" id="EMD-15863"/>
<dbReference type="EMDB" id="EMD-16052"/>
<dbReference type="EMDB" id="EMD-16155"/>
<dbReference type="EMDB" id="EMD-16232"/>
<dbReference type="EMDB" id="EMD-17367"/>
<dbReference type="EMDB" id="EMD-19197"/>
<dbReference type="EMDB" id="EMD-20255"/>
<dbReference type="EMDB" id="EMD-20256"/>
<dbReference type="EMDB" id="EMD-20257"/>
<dbReference type="EMDB" id="EMD-20258"/>
<dbReference type="EMDB" id="EMD-26035"/>
<dbReference type="EMDB" id="EMD-40344"/>
<dbReference type="EMDB" id="EMD-4130"/>
<dbReference type="EMDB" id="EMD-4131"/>
<dbReference type="EMDB" id="EMD-4132"/>
<dbReference type="EMDB" id="EMD-4133"/>
<dbReference type="EMDB" id="EMD-4134"/>
<dbReference type="EMDB" id="EMD-4135"/>
<dbReference type="EMDB" id="EMD-4136"/>
<dbReference type="EMDB" id="EMD-4137"/>
<dbReference type="EMDB" id="EMD-4300"/>
<dbReference type="EMDB" id="EMD-4315"/>
<dbReference type="EMDB" id="EMD-4316"/>
<dbReference type="EMDB" id="EMD-4317"/>
<dbReference type="EMDB" id="EMD-44461"/>
<dbReference type="EMDB" id="EMD-44463"/>
<dbReference type="EMDB" id="EMD-44464"/>
<dbReference type="EMDB" id="EMD-50124"/>
<dbReference type="EMDB" id="EMD-50125"/>
<dbReference type="EMDB" id="EMD-50126"/>
<dbReference type="EMDB" id="EMD-7834"/>
<dbReference type="EMDB" id="EMD-9240"/>
<dbReference type="EMDB" id="EMD-9242"/>
<dbReference type="SMR" id="G1TKB3"/>
<dbReference type="FunCoup" id="G1TKB3">
    <property type="interactions" value="1666"/>
</dbReference>
<dbReference type="STRING" id="9986.ENSOCUP00000017398"/>
<dbReference type="PaxDb" id="9986-ENSOCUP00000017398"/>
<dbReference type="Ensembl" id="ENSOCUT00000013210.3">
    <property type="protein sequence ID" value="ENSOCUP00000017398.2"/>
    <property type="gene ID" value="ENSOCUG00000022399.2"/>
</dbReference>
<dbReference type="eggNOG" id="KOG3295">
    <property type="taxonomic scope" value="Eukaryota"/>
</dbReference>
<dbReference type="GeneTree" id="ENSGT00390000007818"/>
<dbReference type="HOGENOM" id="CLU_075696_1_0_1"/>
<dbReference type="InParanoid" id="G1TKB3"/>
<dbReference type="OrthoDB" id="10264538at2759"/>
<dbReference type="TreeFam" id="TF300073"/>
<dbReference type="Proteomes" id="UP000001811">
    <property type="component" value="Chromosome 12"/>
</dbReference>
<dbReference type="Bgee" id="ENSOCUG00000022399">
    <property type="expression patterns" value="Expressed in uterus and 17 other cell types or tissues"/>
</dbReference>
<dbReference type="GO" id="GO:0022625">
    <property type="term" value="C:cytosolic large ribosomal subunit"/>
    <property type="evidence" value="ECO:0007669"/>
    <property type="project" value="TreeGrafter"/>
</dbReference>
<dbReference type="GO" id="GO:0003723">
    <property type="term" value="F:RNA binding"/>
    <property type="evidence" value="ECO:0007669"/>
    <property type="project" value="TreeGrafter"/>
</dbReference>
<dbReference type="GO" id="GO:0003735">
    <property type="term" value="F:structural constituent of ribosome"/>
    <property type="evidence" value="ECO:0007669"/>
    <property type="project" value="InterPro"/>
</dbReference>
<dbReference type="GO" id="GO:0006412">
    <property type="term" value="P:translation"/>
    <property type="evidence" value="ECO:0007669"/>
    <property type="project" value="InterPro"/>
</dbReference>
<dbReference type="FunFam" id="1.20.5.110:FF:000003">
    <property type="entry name" value="60S ribosomal protein L13"/>
    <property type="match status" value="1"/>
</dbReference>
<dbReference type="Gene3D" id="1.20.5.110">
    <property type="match status" value="1"/>
</dbReference>
<dbReference type="HAMAP" id="MF_00499">
    <property type="entry name" value="Ribosomal_eL13"/>
    <property type="match status" value="1"/>
</dbReference>
<dbReference type="InterPro" id="IPR001380">
    <property type="entry name" value="Ribosomal_eL13"/>
</dbReference>
<dbReference type="PANTHER" id="PTHR11722">
    <property type="entry name" value="60S RIBOSOMAL PROTEIN L13"/>
    <property type="match status" value="1"/>
</dbReference>
<dbReference type="PANTHER" id="PTHR11722:SF0">
    <property type="entry name" value="LARGE RIBOSOMAL SUBUNIT PROTEIN EL13"/>
    <property type="match status" value="1"/>
</dbReference>
<dbReference type="Pfam" id="PF01294">
    <property type="entry name" value="Ribosomal_L13e"/>
    <property type="match status" value="1"/>
</dbReference>
<proteinExistence type="evidence at protein level"/>
<reference key="1">
    <citation type="journal article" date="2011" name="Nature">
        <title>A high-resolution map of human evolutionary constraint using 29 mammals.</title>
        <authorList>
            <person name="Lindblad-Toh K."/>
            <person name="Garber M."/>
            <person name="Zuk O."/>
            <person name="Lin M.F."/>
            <person name="Parker B.J."/>
            <person name="Washietl S."/>
            <person name="Kheradpour P."/>
            <person name="Ernst J."/>
            <person name="Jordan G."/>
            <person name="Mauceli E."/>
            <person name="Ward L.D."/>
            <person name="Lowe C.B."/>
            <person name="Holloway A.K."/>
            <person name="Clamp M."/>
            <person name="Gnerre S."/>
            <person name="Alfoldi J."/>
            <person name="Beal K."/>
            <person name="Chang J."/>
            <person name="Clawson H."/>
            <person name="Cuff J."/>
            <person name="Di Palma F."/>
            <person name="Fitzgerald S."/>
            <person name="Flicek P."/>
            <person name="Guttman M."/>
            <person name="Hubisz M.J."/>
            <person name="Jaffe D.B."/>
            <person name="Jungreis I."/>
            <person name="Kent W.J."/>
            <person name="Kostka D."/>
            <person name="Lara M."/>
            <person name="Martins A.L."/>
            <person name="Massingham T."/>
            <person name="Moltke I."/>
            <person name="Raney B.J."/>
            <person name="Rasmussen M.D."/>
            <person name="Robinson J."/>
            <person name="Stark A."/>
            <person name="Vilella A.J."/>
            <person name="Wen J."/>
            <person name="Xie X."/>
            <person name="Zody M.C."/>
            <person name="Baldwin J."/>
            <person name="Bloom T."/>
            <person name="Chin C.W."/>
            <person name="Heiman D."/>
            <person name="Nicol R."/>
            <person name="Nusbaum C."/>
            <person name="Young S."/>
            <person name="Wilkinson J."/>
            <person name="Worley K.C."/>
            <person name="Kovar C.L."/>
            <person name="Muzny D.M."/>
            <person name="Gibbs R.A."/>
            <person name="Cree A."/>
            <person name="Dihn H.H."/>
            <person name="Fowler G."/>
            <person name="Jhangiani S."/>
            <person name="Joshi V."/>
            <person name="Lee S."/>
            <person name="Lewis L.R."/>
            <person name="Nazareth L.V."/>
            <person name="Okwuonu G."/>
            <person name="Santibanez J."/>
            <person name="Warren W.C."/>
            <person name="Mardis E.R."/>
            <person name="Weinstock G.M."/>
            <person name="Wilson R.K."/>
            <person name="Delehaunty K."/>
            <person name="Dooling D."/>
            <person name="Fronik C."/>
            <person name="Fulton L."/>
            <person name="Fulton B."/>
            <person name="Graves T."/>
            <person name="Minx P."/>
            <person name="Sodergren E."/>
            <person name="Birney E."/>
            <person name="Margulies E.H."/>
            <person name="Herrero J."/>
            <person name="Green E.D."/>
            <person name="Haussler D."/>
            <person name="Siepel A."/>
            <person name="Goldman N."/>
            <person name="Pollard K.S."/>
            <person name="Pedersen J.S."/>
            <person name="Lander E.S."/>
            <person name="Kellis M."/>
        </authorList>
    </citation>
    <scope>NUCLEOTIDE SEQUENCE [LARGE SCALE GENOMIC DNA]</scope>
    <source>
        <strain>Thorbecke</strain>
    </source>
</reference>
<reference evidence="6 7" key="2">
    <citation type="journal article" date="2022" name="Science">
        <title>Structure of the mammalian ribosome as it decodes the selenocysteine UGA codon.</title>
        <authorList>
            <person name="Hilal T."/>
            <person name="Killam B.Y."/>
            <person name="Grozdanovic M."/>
            <person name="Dobosz-Bartoszek M."/>
            <person name="Loerke J."/>
            <person name="Buerger J."/>
            <person name="Mielke T."/>
            <person name="Copeland P.R."/>
            <person name="Simonovic M."/>
            <person name="Spahn C.M.T."/>
        </authorList>
    </citation>
    <scope>STRUCTURE BY ELECTRON MICROSCOPY (2.80 ANGSTROMS) OF RIBOSOME</scope>
    <scope>SUBCELLULAR LOCATION</scope>
    <scope>SUBUNIT</scope>
</reference>
<reference evidence="5" key="3">
    <citation type="journal article" date="2023" name="Nature">
        <title>A molecular network of conserved factors keeps ribosomes dormant in the egg.</title>
        <authorList>
            <person name="Leesch F."/>
            <person name="Lorenzo-Orts L."/>
            <person name="Pribitzer C."/>
            <person name="Grishkovskaya I."/>
            <person name="Roehsner J."/>
            <person name="Chugunova A."/>
            <person name="Matzinger M."/>
            <person name="Roitinger E."/>
            <person name="Belacic K."/>
            <person name="Kandolf S."/>
            <person name="Lin T.Y."/>
            <person name="Mechtler K."/>
            <person name="Meinhart A."/>
            <person name="Haselbach D."/>
            <person name="Pauli A."/>
        </authorList>
    </citation>
    <scope>STRUCTURE BY ELECTRON MICROSCOPY (2.30 ANGSTROMS) OF RIBOSOME</scope>
    <scope>SUBCELLULAR LOCATION</scope>
    <scope>SUBUNIT</scope>
</reference>
<accession>G1TKB3</accession>
<keyword id="KW-0002">3D-structure</keyword>
<keyword id="KW-0007">Acetylation</keyword>
<keyword id="KW-0963">Cytoplasm</keyword>
<keyword id="KW-1017">Isopeptide bond</keyword>
<keyword id="KW-0597">Phosphoprotein</keyword>
<keyword id="KW-1185">Reference proteome</keyword>
<keyword id="KW-0687">Ribonucleoprotein</keyword>
<keyword id="KW-0689">Ribosomal protein</keyword>
<keyword id="KW-0832">Ubl conjugation</keyword>
<protein>
    <recommendedName>
        <fullName>Large ribosomal subunit protein eL13</fullName>
    </recommendedName>
    <alternativeName>
        <fullName>60S ribosomal protein L13</fullName>
    </alternativeName>
</protein>
<evidence type="ECO:0000250" key="1">
    <source>
        <dbReference type="UniProtKB" id="P26373"/>
    </source>
</evidence>
<evidence type="ECO:0000269" key="2">
    <source>
    </source>
</evidence>
<evidence type="ECO:0000269" key="3">
    <source>
    </source>
</evidence>
<evidence type="ECO:0000305" key="4"/>
<evidence type="ECO:0007744" key="5">
    <source>
        <dbReference type="PDB" id="7OYD"/>
    </source>
</evidence>
<evidence type="ECO:0007744" key="6">
    <source>
        <dbReference type="PDB" id="7ZJW"/>
    </source>
</evidence>
<evidence type="ECO:0007744" key="7">
    <source>
        <dbReference type="PDB" id="7ZJX"/>
    </source>
</evidence>
<feature type="chain" id="PRO_0000460101" description="Large ribosomal subunit protein eL13">
    <location>
        <begin position="1"/>
        <end position="211"/>
    </location>
</feature>
<feature type="modified residue" description="N6-acetyllysine" evidence="1">
    <location>
        <position position="16"/>
    </location>
</feature>
<feature type="modified residue" description="Phosphoserine" evidence="1">
    <location>
        <position position="77"/>
    </location>
</feature>
<feature type="modified residue" description="Phosphoserine" evidence="1">
    <location>
        <position position="106"/>
    </location>
</feature>
<feature type="modified residue" description="N6-acetyllysine; alternate" evidence="1">
    <location>
        <position position="177"/>
    </location>
</feature>
<feature type="cross-link" description="Glycyl lysine isopeptide (Lys-Gly) (interchain with G-Cter in SUMO2)" evidence="1">
    <location>
        <position position="123"/>
    </location>
</feature>
<feature type="cross-link" description="Glycyl lysine isopeptide (Lys-Gly) (interchain with G-Cter in SUMO2)" evidence="1">
    <location>
        <position position="145"/>
    </location>
</feature>
<feature type="cross-link" description="Glycyl lysine isopeptide (Lys-Gly) (interchain with G-Cter in SUMO1); alternate" evidence="1">
    <location>
        <position position="174"/>
    </location>
</feature>
<feature type="cross-link" description="Glycyl lysine isopeptide (Lys-Gly) (interchain with G-Cter in SUMO2); alternate" evidence="1">
    <location>
        <position position="174"/>
    </location>
</feature>
<feature type="cross-link" description="Glycyl lysine isopeptide (Lys-Gly) (interchain with G-Cter in SUMO2); alternate" evidence="1">
    <location>
        <position position="177"/>
    </location>
</feature>